<proteinExistence type="inferred from homology"/>
<reference key="1">
    <citation type="journal article" date="2008" name="J. Bacteriol.">
        <title>Comparative genome analysis of 'Candidatus Phytoplasma australiense' (subgroup tuf-Australia I; rp-A) and 'Ca. Phytoplasma asteris' strains OY-M and AY-WB.</title>
        <authorList>
            <person name="Tran-Nguyen L.T."/>
            <person name="Kube M."/>
            <person name="Schneider B."/>
            <person name="Reinhardt R."/>
            <person name="Gibb K.S."/>
        </authorList>
    </citation>
    <scope>NUCLEOTIDE SEQUENCE [LARGE SCALE GENOMIC DNA]</scope>
</reference>
<keyword id="KW-1185">Reference proteome</keyword>
<keyword id="KW-0687">Ribonucleoprotein</keyword>
<keyword id="KW-0689">Ribosomal protein</keyword>
<organism>
    <name type="scientific">Phytoplasma australiense</name>
    <dbReference type="NCBI Taxonomy" id="59748"/>
    <lineage>
        <taxon>Bacteria</taxon>
        <taxon>Bacillati</taxon>
        <taxon>Mycoplasmatota</taxon>
        <taxon>Mollicutes</taxon>
        <taxon>Acholeplasmatales</taxon>
        <taxon>Acholeplasmataceae</taxon>
        <taxon>Candidatus Phytoplasma</taxon>
        <taxon>16SrXII (Stolbur group)</taxon>
    </lineage>
</organism>
<sequence length="65" mass="7560">MAVPFRRTGKTAKRKRRTHYKLDNPALVVCKQTNNFTLSHRVTKNSGYYKGRLLLENNKIVKKVA</sequence>
<accession>B1VAF0</accession>
<gene>
    <name evidence="1" type="primary">rpmF</name>
    <name type="ordered locus">PA0589</name>
</gene>
<dbReference type="EMBL" id="AM422018">
    <property type="protein sequence ID" value="CAM11923.1"/>
    <property type="molecule type" value="Genomic_DNA"/>
</dbReference>
<dbReference type="SMR" id="B1VAF0"/>
<dbReference type="STRING" id="59748.PA0589"/>
<dbReference type="KEGG" id="pal:PA0589"/>
<dbReference type="eggNOG" id="COG0333">
    <property type="taxonomic scope" value="Bacteria"/>
</dbReference>
<dbReference type="Proteomes" id="UP000008323">
    <property type="component" value="Chromosome"/>
</dbReference>
<dbReference type="GO" id="GO:0015934">
    <property type="term" value="C:large ribosomal subunit"/>
    <property type="evidence" value="ECO:0007669"/>
    <property type="project" value="InterPro"/>
</dbReference>
<dbReference type="GO" id="GO:0003735">
    <property type="term" value="F:structural constituent of ribosome"/>
    <property type="evidence" value="ECO:0007669"/>
    <property type="project" value="InterPro"/>
</dbReference>
<dbReference type="GO" id="GO:0006412">
    <property type="term" value="P:translation"/>
    <property type="evidence" value="ECO:0007669"/>
    <property type="project" value="UniProtKB-UniRule"/>
</dbReference>
<dbReference type="HAMAP" id="MF_00340">
    <property type="entry name" value="Ribosomal_bL32"/>
    <property type="match status" value="1"/>
</dbReference>
<dbReference type="InterPro" id="IPR002677">
    <property type="entry name" value="Ribosomal_bL32"/>
</dbReference>
<dbReference type="InterPro" id="IPR044957">
    <property type="entry name" value="Ribosomal_bL32_bact"/>
</dbReference>
<dbReference type="InterPro" id="IPR011332">
    <property type="entry name" value="Ribosomal_zn-bd"/>
</dbReference>
<dbReference type="NCBIfam" id="TIGR01031">
    <property type="entry name" value="rpmF_bact"/>
    <property type="match status" value="1"/>
</dbReference>
<dbReference type="PANTHER" id="PTHR35534">
    <property type="entry name" value="50S RIBOSOMAL PROTEIN L32"/>
    <property type="match status" value="1"/>
</dbReference>
<dbReference type="PANTHER" id="PTHR35534:SF1">
    <property type="entry name" value="LARGE RIBOSOMAL SUBUNIT PROTEIN BL32"/>
    <property type="match status" value="1"/>
</dbReference>
<dbReference type="Pfam" id="PF01783">
    <property type="entry name" value="Ribosomal_L32p"/>
    <property type="match status" value="1"/>
</dbReference>
<dbReference type="SUPFAM" id="SSF57829">
    <property type="entry name" value="Zn-binding ribosomal proteins"/>
    <property type="match status" value="1"/>
</dbReference>
<evidence type="ECO:0000255" key="1">
    <source>
        <dbReference type="HAMAP-Rule" id="MF_00340"/>
    </source>
</evidence>
<evidence type="ECO:0000305" key="2"/>
<protein>
    <recommendedName>
        <fullName evidence="1">Large ribosomal subunit protein bL32</fullName>
    </recommendedName>
    <alternativeName>
        <fullName evidence="2">50S ribosomal protein L32</fullName>
    </alternativeName>
</protein>
<comment type="similarity">
    <text evidence="1">Belongs to the bacterial ribosomal protein bL32 family.</text>
</comment>
<name>RL32_PHYAS</name>
<feature type="chain" id="PRO_1000120155" description="Large ribosomal subunit protein bL32">
    <location>
        <begin position="1"/>
        <end position="65"/>
    </location>
</feature>